<keyword id="KW-0133">Cell shape</keyword>
<keyword id="KW-0961">Cell wall biogenesis/degradation</keyword>
<keyword id="KW-0413">Isomerase</keyword>
<keyword id="KW-0573">Peptidoglycan synthesis</keyword>
<keyword id="KW-1185">Reference proteome</keyword>
<feature type="chain" id="PRO_0000095447" description="Glutamate racemase">
    <location>
        <begin position="1"/>
        <end position="292"/>
    </location>
</feature>
<feature type="active site" description="Proton donor/acceptor" evidence="1">
    <location>
        <position position="91"/>
    </location>
</feature>
<feature type="active site" description="Proton donor/acceptor" evidence="1">
    <location>
        <position position="200"/>
    </location>
</feature>
<feature type="binding site" evidence="1">
    <location>
        <begin position="28"/>
        <end position="29"/>
    </location>
    <ligand>
        <name>substrate</name>
    </ligand>
</feature>
<feature type="binding site" evidence="1">
    <location>
        <begin position="60"/>
        <end position="61"/>
    </location>
    <ligand>
        <name>substrate</name>
    </ligand>
</feature>
<feature type="binding site" evidence="1">
    <location>
        <begin position="92"/>
        <end position="93"/>
    </location>
    <ligand>
        <name>substrate</name>
    </ligand>
</feature>
<feature type="binding site" evidence="1">
    <location>
        <begin position="201"/>
        <end position="202"/>
    </location>
    <ligand>
        <name>substrate</name>
    </ligand>
</feature>
<gene>
    <name evidence="1" type="primary">murI</name>
    <name type="ordered locus">alr0094</name>
</gene>
<organism>
    <name type="scientific">Nostoc sp. (strain PCC 7120 / SAG 25.82 / UTEX 2576)</name>
    <dbReference type="NCBI Taxonomy" id="103690"/>
    <lineage>
        <taxon>Bacteria</taxon>
        <taxon>Bacillati</taxon>
        <taxon>Cyanobacteriota</taxon>
        <taxon>Cyanophyceae</taxon>
        <taxon>Nostocales</taxon>
        <taxon>Nostocaceae</taxon>
        <taxon>Nostoc</taxon>
    </lineage>
</organism>
<reference key="1">
    <citation type="submission" date="1999-12" db="EMBL/GenBank/DDBJ databases">
        <title>Possible involvement of cell wall peptidoglycan in deposition of heterocyst envelope polysaccharide in Anabaena sp. strain PCC 7120.</title>
        <authorList>
            <person name="Zhu J."/>
            <person name="Wolk C.P."/>
        </authorList>
    </citation>
    <scope>NUCLEOTIDE SEQUENCE [GENOMIC DNA]</scope>
</reference>
<reference key="2">
    <citation type="journal article" date="2001" name="DNA Res.">
        <title>Complete genomic sequence of the filamentous nitrogen-fixing cyanobacterium Anabaena sp. strain PCC 7120.</title>
        <authorList>
            <person name="Kaneko T."/>
            <person name="Nakamura Y."/>
            <person name="Wolk C.P."/>
            <person name="Kuritz T."/>
            <person name="Sasamoto S."/>
            <person name="Watanabe A."/>
            <person name="Iriguchi M."/>
            <person name="Ishikawa A."/>
            <person name="Kawashima K."/>
            <person name="Kimura T."/>
            <person name="Kishida Y."/>
            <person name="Kohara M."/>
            <person name="Matsumoto M."/>
            <person name="Matsuno A."/>
            <person name="Muraki A."/>
            <person name="Nakazaki N."/>
            <person name="Shimpo S."/>
            <person name="Sugimoto M."/>
            <person name="Takazawa M."/>
            <person name="Yamada M."/>
            <person name="Yasuda M."/>
            <person name="Tabata S."/>
        </authorList>
    </citation>
    <scope>NUCLEOTIDE SEQUENCE [LARGE SCALE GENOMIC DNA]</scope>
    <source>
        <strain>PCC 7120 / SAG 25.82 / UTEX 2576</strain>
    </source>
</reference>
<protein>
    <recommendedName>
        <fullName evidence="1">Glutamate racemase</fullName>
        <ecNumber evidence="1">5.1.1.3</ecNumber>
    </recommendedName>
</protein>
<evidence type="ECO:0000255" key="1">
    <source>
        <dbReference type="HAMAP-Rule" id="MF_00258"/>
    </source>
</evidence>
<proteinExistence type="inferred from homology"/>
<name>MURI_NOSS1</name>
<sequence>MYSSSSIEGNLYGFSAQEPQRAPIGVFDSGVGGLTVLRQIYRQLPNESVIYFGDTARLPYGIRSQAEILTFVRDILDWMQQQHVKMVVMACNTSSALALDIVREEYDFPILGVILPGAKAAVQQGKRIGVISTPATAKSNAYRQAIWEIDPNVEVWQVGCPEFVPLIEQNRIQDPYTTEVARAYLEPLIQQDIDTLVYGCTHYPLLAPVLRSLLPPQVKIIDPAVHVVTACTQELDLLGLSNTHPPLPTRFAVSGCPQQFSQSGVHWLGYTPLVEAVDFAGVPVSQLQQDLA</sequence>
<dbReference type="EC" id="5.1.1.3" evidence="1"/>
<dbReference type="EMBL" id="AF216288">
    <property type="protein sequence ID" value="AAF33755.1"/>
    <property type="molecule type" value="Genomic_DNA"/>
</dbReference>
<dbReference type="EMBL" id="BA000019">
    <property type="protein sequence ID" value="BAB77618.1"/>
    <property type="molecule type" value="Genomic_DNA"/>
</dbReference>
<dbReference type="PIR" id="AF1818">
    <property type="entry name" value="AF1818"/>
</dbReference>
<dbReference type="RefSeq" id="WP_010994271.1">
    <property type="nucleotide sequence ID" value="NZ_RSCN01000016.1"/>
</dbReference>
<dbReference type="SMR" id="Q9L870"/>
<dbReference type="STRING" id="103690.gene:10492098"/>
<dbReference type="KEGG" id="ana:alr0094"/>
<dbReference type="eggNOG" id="COG0796">
    <property type="taxonomic scope" value="Bacteria"/>
</dbReference>
<dbReference type="OrthoDB" id="9801055at2"/>
<dbReference type="UniPathway" id="UPA00219"/>
<dbReference type="Proteomes" id="UP000002483">
    <property type="component" value="Chromosome"/>
</dbReference>
<dbReference type="GO" id="GO:0008881">
    <property type="term" value="F:glutamate racemase activity"/>
    <property type="evidence" value="ECO:0007669"/>
    <property type="project" value="UniProtKB-UniRule"/>
</dbReference>
<dbReference type="GO" id="GO:0071555">
    <property type="term" value="P:cell wall organization"/>
    <property type="evidence" value="ECO:0007669"/>
    <property type="project" value="UniProtKB-KW"/>
</dbReference>
<dbReference type="GO" id="GO:0009252">
    <property type="term" value="P:peptidoglycan biosynthetic process"/>
    <property type="evidence" value="ECO:0007669"/>
    <property type="project" value="UniProtKB-UniRule"/>
</dbReference>
<dbReference type="GO" id="GO:0008360">
    <property type="term" value="P:regulation of cell shape"/>
    <property type="evidence" value="ECO:0007669"/>
    <property type="project" value="UniProtKB-KW"/>
</dbReference>
<dbReference type="FunFam" id="3.40.50.1860:FF:000002">
    <property type="entry name" value="Glutamate racemase"/>
    <property type="match status" value="1"/>
</dbReference>
<dbReference type="Gene3D" id="3.40.50.1860">
    <property type="match status" value="2"/>
</dbReference>
<dbReference type="HAMAP" id="MF_00258">
    <property type="entry name" value="Glu_racemase"/>
    <property type="match status" value="1"/>
</dbReference>
<dbReference type="InterPro" id="IPR015942">
    <property type="entry name" value="Asp/Glu/hydantoin_racemase"/>
</dbReference>
<dbReference type="InterPro" id="IPR001920">
    <property type="entry name" value="Asp/Glu_race"/>
</dbReference>
<dbReference type="InterPro" id="IPR018187">
    <property type="entry name" value="Asp/Glu_racemase_AS_1"/>
</dbReference>
<dbReference type="InterPro" id="IPR033134">
    <property type="entry name" value="Asp/Glu_racemase_AS_2"/>
</dbReference>
<dbReference type="InterPro" id="IPR004391">
    <property type="entry name" value="Glu_race"/>
</dbReference>
<dbReference type="NCBIfam" id="TIGR00067">
    <property type="entry name" value="glut_race"/>
    <property type="match status" value="1"/>
</dbReference>
<dbReference type="PANTHER" id="PTHR21198">
    <property type="entry name" value="GLUTAMATE RACEMASE"/>
    <property type="match status" value="1"/>
</dbReference>
<dbReference type="PANTHER" id="PTHR21198:SF2">
    <property type="entry name" value="GLUTAMATE RACEMASE"/>
    <property type="match status" value="1"/>
</dbReference>
<dbReference type="Pfam" id="PF01177">
    <property type="entry name" value="Asp_Glu_race"/>
    <property type="match status" value="1"/>
</dbReference>
<dbReference type="SUPFAM" id="SSF53681">
    <property type="entry name" value="Aspartate/glutamate racemase"/>
    <property type="match status" value="2"/>
</dbReference>
<dbReference type="PROSITE" id="PS00923">
    <property type="entry name" value="ASP_GLU_RACEMASE_1"/>
    <property type="match status" value="1"/>
</dbReference>
<dbReference type="PROSITE" id="PS00924">
    <property type="entry name" value="ASP_GLU_RACEMASE_2"/>
    <property type="match status" value="1"/>
</dbReference>
<comment type="function">
    <text evidence="1">Provides the (R)-glutamate required for cell wall biosynthesis.</text>
</comment>
<comment type="catalytic activity">
    <reaction evidence="1">
        <text>L-glutamate = D-glutamate</text>
        <dbReference type="Rhea" id="RHEA:12813"/>
        <dbReference type="ChEBI" id="CHEBI:29985"/>
        <dbReference type="ChEBI" id="CHEBI:29986"/>
        <dbReference type="EC" id="5.1.1.3"/>
    </reaction>
</comment>
<comment type="pathway">
    <text evidence="1">Cell wall biogenesis; peptidoglycan biosynthesis.</text>
</comment>
<comment type="similarity">
    <text evidence="1">Belongs to the aspartate/glutamate racemases family.</text>
</comment>
<accession>Q9L870</accession>